<dbReference type="EC" id="1.11.1.26" evidence="1"/>
<dbReference type="EMBL" id="AE015929">
    <property type="protein sequence ID" value="AAO06000.1"/>
    <property type="molecule type" value="Genomic_DNA"/>
</dbReference>
<dbReference type="RefSeq" id="NP_765912.1">
    <property type="nucleotide sequence ID" value="NC_004461.1"/>
</dbReference>
<dbReference type="RefSeq" id="WP_002455901.1">
    <property type="nucleotide sequence ID" value="NZ_WBME01000004.1"/>
</dbReference>
<dbReference type="SMR" id="Q8CMQ2"/>
<dbReference type="PeroxiBase" id="4925">
    <property type="entry name" value="SepAhpC"/>
</dbReference>
<dbReference type="KEGG" id="sep:SE_2357"/>
<dbReference type="PATRIC" id="fig|176280.10.peg.2300"/>
<dbReference type="eggNOG" id="COG0450">
    <property type="taxonomic scope" value="Bacteria"/>
</dbReference>
<dbReference type="HOGENOM" id="CLU_042529_21_3_9"/>
<dbReference type="OrthoDB" id="9812811at2"/>
<dbReference type="Proteomes" id="UP000001411">
    <property type="component" value="Chromosome"/>
</dbReference>
<dbReference type="GO" id="GO:0005829">
    <property type="term" value="C:cytosol"/>
    <property type="evidence" value="ECO:0007669"/>
    <property type="project" value="TreeGrafter"/>
</dbReference>
<dbReference type="GO" id="GO:0102039">
    <property type="term" value="F:NADH-dependent peroxiredoxin activity"/>
    <property type="evidence" value="ECO:0007669"/>
    <property type="project" value="UniProtKB-EC"/>
</dbReference>
<dbReference type="GO" id="GO:0008379">
    <property type="term" value="F:thioredoxin peroxidase activity"/>
    <property type="evidence" value="ECO:0007669"/>
    <property type="project" value="TreeGrafter"/>
</dbReference>
<dbReference type="GO" id="GO:0045454">
    <property type="term" value="P:cell redox homeostasis"/>
    <property type="evidence" value="ECO:0007669"/>
    <property type="project" value="TreeGrafter"/>
</dbReference>
<dbReference type="GO" id="GO:0033554">
    <property type="term" value="P:cellular response to stress"/>
    <property type="evidence" value="ECO:0007669"/>
    <property type="project" value="TreeGrafter"/>
</dbReference>
<dbReference type="GO" id="GO:0042744">
    <property type="term" value="P:hydrogen peroxide catabolic process"/>
    <property type="evidence" value="ECO:0007669"/>
    <property type="project" value="TreeGrafter"/>
</dbReference>
<dbReference type="GO" id="GO:0006979">
    <property type="term" value="P:response to oxidative stress"/>
    <property type="evidence" value="ECO:0007669"/>
    <property type="project" value="InterPro"/>
</dbReference>
<dbReference type="CDD" id="cd03015">
    <property type="entry name" value="PRX_Typ2cys"/>
    <property type="match status" value="1"/>
</dbReference>
<dbReference type="FunFam" id="3.40.30.10:FF:000002">
    <property type="entry name" value="Alkyl hydroperoxide reductase C"/>
    <property type="match status" value="1"/>
</dbReference>
<dbReference type="Gene3D" id="3.40.30.10">
    <property type="entry name" value="Glutaredoxin"/>
    <property type="match status" value="1"/>
</dbReference>
<dbReference type="InterPro" id="IPR017559">
    <property type="entry name" value="AhpC"/>
</dbReference>
<dbReference type="InterPro" id="IPR000866">
    <property type="entry name" value="AhpC/TSA"/>
</dbReference>
<dbReference type="InterPro" id="IPR050217">
    <property type="entry name" value="Peroxiredoxin"/>
</dbReference>
<dbReference type="InterPro" id="IPR024706">
    <property type="entry name" value="Peroxiredoxin_AhpC-typ"/>
</dbReference>
<dbReference type="InterPro" id="IPR019479">
    <property type="entry name" value="Peroxiredoxin_C"/>
</dbReference>
<dbReference type="InterPro" id="IPR036249">
    <property type="entry name" value="Thioredoxin-like_sf"/>
</dbReference>
<dbReference type="InterPro" id="IPR013766">
    <property type="entry name" value="Thioredoxin_domain"/>
</dbReference>
<dbReference type="NCBIfam" id="TIGR03137">
    <property type="entry name" value="AhpC"/>
    <property type="match status" value="1"/>
</dbReference>
<dbReference type="PANTHER" id="PTHR10681:SF121">
    <property type="entry name" value="ALKYL HYDROPEROXIDE REDUCTASE C"/>
    <property type="match status" value="1"/>
</dbReference>
<dbReference type="PANTHER" id="PTHR10681">
    <property type="entry name" value="THIOREDOXIN PEROXIDASE"/>
    <property type="match status" value="1"/>
</dbReference>
<dbReference type="Pfam" id="PF10417">
    <property type="entry name" value="1-cysPrx_C"/>
    <property type="match status" value="1"/>
</dbReference>
<dbReference type="Pfam" id="PF00578">
    <property type="entry name" value="AhpC-TSA"/>
    <property type="match status" value="1"/>
</dbReference>
<dbReference type="PIRSF" id="PIRSF000239">
    <property type="entry name" value="AHPC"/>
    <property type="match status" value="1"/>
</dbReference>
<dbReference type="SUPFAM" id="SSF52833">
    <property type="entry name" value="Thioredoxin-like"/>
    <property type="match status" value="1"/>
</dbReference>
<dbReference type="PROSITE" id="PS51352">
    <property type="entry name" value="THIOREDOXIN_2"/>
    <property type="match status" value="1"/>
</dbReference>
<proteinExistence type="inferred from homology"/>
<keyword id="KW-0049">Antioxidant</keyword>
<keyword id="KW-0963">Cytoplasm</keyword>
<keyword id="KW-1015">Disulfide bond</keyword>
<keyword id="KW-0560">Oxidoreductase</keyword>
<keyword id="KW-0575">Peroxidase</keyword>
<keyword id="KW-0676">Redox-active center</keyword>
<evidence type="ECO:0000250" key="1">
    <source>
        <dbReference type="UniProtKB" id="P0A251"/>
    </source>
</evidence>
<evidence type="ECO:0000250" key="2">
    <source>
        <dbReference type="UniProtKB" id="P0AE08"/>
    </source>
</evidence>
<evidence type="ECO:0000255" key="3">
    <source>
        <dbReference type="PROSITE-ProRule" id="PRU00691"/>
    </source>
</evidence>
<evidence type="ECO:0000305" key="4"/>
<sequence length="189" mass="21086">MSLINKEILPFTAQAYDPKKDEFKEVTQEDFKGSWNVVCFYPADFSFVCPTELEDLQNQYAKLQELGVNVYSVSTDTHFVHKAWHDHSDAISKLEYSMIGDPSQTITRNFDVLDEESGLAQRGTFIIDPDGVVQAAEINADGIGRDASTLVNKIKAAQYVRQHPGEVCPAKWEEGSESLQPGLDLVGKI</sequence>
<comment type="function">
    <text evidence="1">Thiol-specific peroxidase that catalyzes the reduction of hydrogen peroxide and organic hydroperoxides to water and alcohols, respectively. Plays a role in cell protection against oxidative stress by detoxifying peroxides.</text>
</comment>
<comment type="catalytic activity">
    <reaction evidence="1">
        <text>a hydroperoxide + NADH + H(+) = an alcohol + NAD(+) + H2O</text>
        <dbReference type="Rhea" id="RHEA:62628"/>
        <dbReference type="ChEBI" id="CHEBI:15377"/>
        <dbReference type="ChEBI" id="CHEBI:15378"/>
        <dbReference type="ChEBI" id="CHEBI:30879"/>
        <dbReference type="ChEBI" id="CHEBI:35924"/>
        <dbReference type="ChEBI" id="CHEBI:57540"/>
        <dbReference type="ChEBI" id="CHEBI:57945"/>
        <dbReference type="EC" id="1.11.1.26"/>
    </reaction>
</comment>
<comment type="subunit">
    <text evidence="1">Homodimer; disulfide-linked, upon oxidation. 5 homodimers assemble to form a ring-like decamer.</text>
</comment>
<comment type="subcellular location">
    <subcellularLocation>
        <location evidence="2">Cytoplasm</location>
    </subcellularLocation>
</comment>
<comment type="miscellaneous">
    <text evidence="1">The active site is a conserved redox-active cysteine residue, the peroxidatic cysteine (C(P)), which makes the nucleophilic attack on the peroxide substrate. The peroxide oxidizes the C(P)-SH to cysteine sulfenic acid (C(P)-SOH), which then reacts with another cysteine residue, the resolving cysteine (C(R)), to form a disulfide bridge. The disulfide is subsequently reduced by an appropriate electron donor to complete the catalytic cycle. In this typical 2-Cys peroxiredoxin, C(R) is provided by the other dimeric subunit to form an intersubunit disulfide. The disulfide is subsequently reduced by AhpF.</text>
</comment>
<comment type="similarity">
    <text evidence="4">Belongs to the peroxiredoxin family. AhpC/Prx1 subfamily.</text>
</comment>
<organism>
    <name type="scientific">Staphylococcus epidermidis (strain ATCC 12228 / FDA PCI 1200)</name>
    <dbReference type="NCBI Taxonomy" id="176280"/>
    <lineage>
        <taxon>Bacteria</taxon>
        <taxon>Bacillati</taxon>
        <taxon>Bacillota</taxon>
        <taxon>Bacilli</taxon>
        <taxon>Bacillales</taxon>
        <taxon>Staphylococcaceae</taxon>
        <taxon>Staphylococcus</taxon>
    </lineage>
</organism>
<feature type="chain" id="PRO_0000135129" description="Alkyl hydroperoxide reductase C">
    <location>
        <begin position="1"/>
        <end position="189"/>
    </location>
</feature>
<feature type="domain" description="Thioredoxin" evidence="3">
    <location>
        <begin position="2"/>
        <end position="159"/>
    </location>
</feature>
<feature type="active site" description="Cysteine sulfenic acid (-SOH) intermediate" evidence="1">
    <location>
        <position position="49"/>
    </location>
</feature>
<feature type="disulfide bond" description="Interchain (with C-168); in linked form" evidence="1">
    <location>
        <position position="49"/>
    </location>
</feature>
<feature type="disulfide bond" description="Interchain (with C-49); in linked form" evidence="1">
    <location>
        <position position="168"/>
    </location>
</feature>
<protein>
    <recommendedName>
        <fullName>Alkyl hydroperoxide reductase C</fullName>
        <ecNumber evidence="1">1.11.1.26</ecNumber>
    </recommendedName>
    <alternativeName>
        <fullName>Peroxiredoxin</fullName>
    </alternativeName>
    <alternativeName>
        <fullName>Thioredoxin peroxidase</fullName>
    </alternativeName>
</protein>
<reference key="1">
    <citation type="journal article" date="2003" name="Mol. Microbiol.">
        <title>Genome-based analysis of virulence genes in a non-biofilm-forming Staphylococcus epidermidis strain (ATCC 12228).</title>
        <authorList>
            <person name="Zhang Y.-Q."/>
            <person name="Ren S.-X."/>
            <person name="Li H.-L."/>
            <person name="Wang Y.-X."/>
            <person name="Fu G."/>
            <person name="Yang J."/>
            <person name="Qin Z.-Q."/>
            <person name="Miao Y.-G."/>
            <person name="Wang W.-Y."/>
            <person name="Chen R.-S."/>
            <person name="Shen Y."/>
            <person name="Chen Z."/>
            <person name="Yuan Z.-H."/>
            <person name="Zhao G.-P."/>
            <person name="Qu D."/>
            <person name="Danchin A."/>
            <person name="Wen Y.-M."/>
        </authorList>
    </citation>
    <scope>NUCLEOTIDE SEQUENCE [LARGE SCALE GENOMIC DNA]</scope>
    <source>
        <strain>ATCC 12228 / FDA PCI 1200</strain>
    </source>
</reference>
<accession>Q8CMQ2</accession>
<name>AHPC_STAES</name>
<gene>
    <name type="primary">ahpC</name>
    <name type="ordered locus">SE_2357</name>
</gene>